<protein>
    <recommendedName>
        <fullName evidence="3">NmrA-like family domain-containing oxidoreductase FrzB</fullName>
        <ecNumber evidence="2">1.5.1.-</ecNumber>
    </recommendedName>
    <alternativeName>
        <fullName evidence="3">FR901483 biosynthesis cluster protein B</fullName>
    </alternativeName>
</protein>
<organism>
    <name type="scientific">Cladobotryum sp</name>
    <dbReference type="NCBI Taxonomy" id="2040732"/>
    <lineage>
        <taxon>Eukaryota</taxon>
        <taxon>Fungi</taxon>
        <taxon>Dikarya</taxon>
        <taxon>Ascomycota</taxon>
        <taxon>Pezizomycotina</taxon>
        <taxon>Sordariomycetes</taxon>
        <taxon>Hypocreomycetidae</taxon>
        <taxon>Hypocreales</taxon>
        <taxon>Hypocreaceae</taxon>
        <taxon>Cladobotryum</taxon>
    </lineage>
</organism>
<comment type="function">
    <text evidence="2">NmrA-like family domain-containing oxidoreductase; part of the gene cluster that mediates the biosynthesis of the alkaloid (-)-FR901483, a potent immunosuppressant that shows efficacy in animal models and a probable inhibitor of purine nucleotide biosynthesis by targeting phosphoribosylpyrophosphate amidotransferase (PPAT) (PubMed:33372776). Within the pathway, FrzB catalyzes the reduction of 4-{[(2S,5S)-5-[(4-hydroxyphenyl)methyl]-2,5-dihydropyrazin-2-yl]methyl}phenol to produce the (S,S)-dityrosyl-piperazine intermediate (PubMed:33372776). The biosynthesis of (-)-FR901483 starts with the condensation of two L-tyrosines to yield (S,S)-dityrosyl-piperazine. This process occurs in 3 steps with the non-canonical nonribosomal peptide synthetase FrzA catalyzing the reduction of L-tyrosine into L-tyrosinal, the spontaneous condensation of 2 L-tyrosinal units, and the subsequent reduction by the NmrA-like family domain-containing oxidoreductase FrzB. The cytochrome P450 monooxygenase FrzC then performs coupling between N10 and C1' to morph the piperazine into a 1,4-diazabicyclo[3.2.1]octane spiro-fused to a 2,5-cyclohexadienone. The dienone portion is further reduced to cyclohexanone by the flavin-dependent reductase FrzD. The methyltranserases (MTs) FrzE and FrzF are then involved in the methylation at the C10' amine and the C4 phenolic oxygen, respectively. The order of the two MTs appear to be interchangeable. Cleavage of the C9-N10' bond by the dioxygenase FrzG then leads to formation of a conjugated iminium. In addition to the oxidation of C9, an additional dehydrogenation between C7 and C8 can occur to give a likely shunt product. The next biosynthetic step is the intramolecular aldol condensation catalyzed by the newly identified aldolase FrzH to yield an aza-tricyclic product with the formation of a C9-C3' bond (PubMed:33372776). The short-chain dehydrogenase/reductase FrzI then produces dephospho-(-)-FR901483 that is phosphorylated at C4'-OH into (-)-FR901483 by the phosphotransferase FrzJ (PubMed:33372776).</text>
</comment>
<comment type="catalytic activity">
    <reaction evidence="2">
        <text>4-{[(2S,5S)-5-[(4-hydroxyphenyl)methyl]-2,5-dihydropyrazin-2-yl]methyl}phenol + 2 NADPH + 2 H(+) = (S,S)-2,5-di-(p-hydroxybenzyl)piperazine + 2 NADP(+)</text>
        <dbReference type="Rhea" id="RHEA:62928"/>
        <dbReference type="ChEBI" id="CHEBI:15378"/>
        <dbReference type="ChEBI" id="CHEBI:57783"/>
        <dbReference type="ChEBI" id="CHEBI:58349"/>
        <dbReference type="ChEBI" id="CHEBI:145881"/>
        <dbReference type="ChEBI" id="CHEBI:145882"/>
    </reaction>
    <physiologicalReaction direction="left-to-right" evidence="2">
        <dbReference type="Rhea" id="RHEA:62929"/>
    </physiologicalReaction>
</comment>
<comment type="pathway">
    <text evidence="2">Secondary metabolite biosynthesis.</text>
</comment>
<comment type="similarity">
    <text evidence="4">Belongs to the NmrA-type oxidoreductase family.</text>
</comment>
<gene>
    <name evidence="3" type="primary">FrzB</name>
</gene>
<evidence type="ECO:0000250" key="1">
    <source>
        <dbReference type="UniProtKB" id="Q9HBL8"/>
    </source>
</evidence>
<evidence type="ECO:0000269" key="2">
    <source>
    </source>
</evidence>
<evidence type="ECO:0000303" key="3">
    <source>
    </source>
</evidence>
<evidence type="ECO:0000305" key="4"/>
<reference key="1">
    <citation type="journal article" date="2021" name="J. Am. Chem. Soc.">
        <title>Biosynthesis of the Immunosuppressant (-)-FR901483.</title>
        <authorList>
            <person name="Zhang Z."/>
            <person name="Tamura Y."/>
            <person name="Tang M."/>
            <person name="Qiao T."/>
            <person name="Sato M."/>
            <person name="Otsu Y."/>
            <person name="Sasamura S."/>
            <person name="Taniguchi M."/>
            <person name="Watanabe K."/>
            <person name="Tang Y."/>
        </authorList>
    </citation>
    <scope>NUCLEOTIDE SEQUENCE [GENOMIC DNA]</scope>
    <scope>FUNCTION</scope>
    <scope>CATALYTIC ACTIVITY</scope>
    <scope>PATHWAY</scope>
    <source>
        <strain>11231</strain>
    </source>
</reference>
<name>FRZB_CLASX</name>
<accession>A0A7T8F1M6</accession>
<proteinExistence type="evidence at protein level"/>
<feature type="chain" id="PRO_0000462329" description="NmrA-like family domain-containing oxidoreductase FrzB">
    <location>
        <begin position="1"/>
        <end position="336"/>
    </location>
</feature>
<feature type="binding site" evidence="1">
    <location>
        <position position="135"/>
    </location>
    <ligand>
        <name>NADP(+)</name>
        <dbReference type="ChEBI" id="CHEBI:58349"/>
    </ligand>
</feature>
<dbReference type="EC" id="1.5.1.-" evidence="2"/>
<dbReference type="EMBL" id="MW322046">
    <property type="protein sequence ID" value="QQO98486.1"/>
    <property type="molecule type" value="Genomic_DNA"/>
</dbReference>
<dbReference type="GO" id="GO:0005634">
    <property type="term" value="C:nucleus"/>
    <property type="evidence" value="ECO:0007669"/>
    <property type="project" value="TreeGrafter"/>
</dbReference>
<dbReference type="CDD" id="cd05251">
    <property type="entry name" value="NmrA_like_SDR_a"/>
    <property type="match status" value="1"/>
</dbReference>
<dbReference type="Gene3D" id="3.40.50.720">
    <property type="entry name" value="NAD(P)-binding Rossmann-like Domain"/>
    <property type="match status" value="1"/>
</dbReference>
<dbReference type="Gene3D" id="3.90.25.10">
    <property type="entry name" value="UDP-galactose 4-epimerase, domain 1"/>
    <property type="match status" value="1"/>
</dbReference>
<dbReference type="InterPro" id="IPR036291">
    <property type="entry name" value="NAD(P)-bd_dom_sf"/>
</dbReference>
<dbReference type="InterPro" id="IPR008030">
    <property type="entry name" value="NmrA-like"/>
</dbReference>
<dbReference type="InterPro" id="IPR051164">
    <property type="entry name" value="NmrA-like_oxidored"/>
</dbReference>
<dbReference type="PANTHER" id="PTHR42748">
    <property type="entry name" value="NITROGEN METABOLITE REPRESSION PROTEIN NMRA FAMILY MEMBER"/>
    <property type="match status" value="1"/>
</dbReference>
<dbReference type="PANTHER" id="PTHR42748:SF7">
    <property type="entry name" value="NMRA LIKE REDOX SENSOR 1-RELATED"/>
    <property type="match status" value="1"/>
</dbReference>
<dbReference type="Pfam" id="PF05368">
    <property type="entry name" value="NmrA"/>
    <property type="match status" value="1"/>
</dbReference>
<dbReference type="SUPFAM" id="SSF51735">
    <property type="entry name" value="NAD(P)-binding Rossmann-fold domains"/>
    <property type="match status" value="1"/>
</dbReference>
<sequence length="336" mass="36861">MTFIIAVVGATGNQGGSVARSLVQNPSFSVRAITRSPDSQASRSLLSAGAEVVKADGFNGEEMLAAFQGAWGAFVNLNSDDPIWRQPGGPTEFDLGKTIVDAAAGAGVKHLVFSSGPPCVEMTGGKVNMKAMEMKYKIEQYARKLGSFETLTPINPAWYLENFLAEEVAPIFGGFPYFPDEEGYLTFRVPHWAGPGGDNRVPFLGIRDDFGDIIHGIFLNPERYNGRVIHGVSQLRGFDELVADFEQVTGKKCRYEPVLPSWEAFDIHGIPELEDVKLMFAFTQTTGGRYFAPEPSEADTAAELKRTTAVALGKPEPEQHTLRTKDFFRKHFATEK</sequence>
<keyword id="KW-0521">NADP</keyword>
<keyword id="KW-0560">Oxidoreductase</keyword>